<dbReference type="EMBL" id="L19201">
    <property type="protein sequence ID" value="AAB02993.1"/>
    <property type="molecule type" value="Genomic_DNA"/>
</dbReference>
<dbReference type="EMBL" id="U00096">
    <property type="protein sequence ID" value="AAC76856.1"/>
    <property type="molecule type" value="Genomic_DNA"/>
</dbReference>
<dbReference type="EMBL" id="AP009048">
    <property type="protein sequence ID" value="BAE77450.1"/>
    <property type="molecule type" value="Genomic_DNA"/>
</dbReference>
<dbReference type="PIR" id="S40804">
    <property type="entry name" value="S40804"/>
</dbReference>
<dbReference type="RefSeq" id="NP_418295.1">
    <property type="nucleotide sequence ID" value="NC_000913.3"/>
</dbReference>
<dbReference type="RefSeq" id="WP_001295263.1">
    <property type="nucleotide sequence ID" value="NZ_STEB01000017.1"/>
</dbReference>
<dbReference type="BMRB" id="P0ADP9"/>
<dbReference type="SMR" id="P0ADP9"/>
<dbReference type="BioGRID" id="4262623">
    <property type="interactions" value="33"/>
</dbReference>
<dbReference type="BioGRID" id="852645">
    <property type="interactions" value="1"/>
</dbReference>
<dbReference type="FunCoup" id="P0ADP9">
    <property type="interactions" value="96"/>
</dbReference>
<dbReference type="IntAct" id="P0ADP9">
    <property type="interactions" value="2"/>
</dbReference>
<dbReference type="STRING" id="511145.b3858"/>
<dbReference type="jPOST" id="P0ADP9"/>
<dbReference type="PaxDb" id="511145-b3858"/>
<dbReference type="EnsemblBacteria" id="AAC76856">
    <property type="protein sequence ID" value="AAC76856"/>
    <property type="gene ID" value="b3858"/>
</dbReference>
<dbReference type="GeneID" id="948348"/>
<dbReference type="KEGG" id="ecj:JW3830"/>
<dbReference type="KEGG" id="eco:b3858"/>
<dbReference type="KEGG" id="ecoc:C3026_20855"/>
<dbReference type="PATRIC" id="fig|1411691.4.peg.2857"/>
<dbReference type="EchoBASE" id="EB1777"/>
<dbReference type="eggNOG" id="COG3084">
    <property type="taxonomic scope" value="Bacteria"/>
</dbReference>
<dbReference type="HOGENOM" id="CLU_170339_0_0_6"/>
<dbReference type="InParanoid" id="P0ADP9"/>
<dbReference type="OMA" id="PEWQKDQ"/>
<dbReference type="OrthoDB" id="6197074at2"/>
<dbReference type="PhylomeDB" id="P0ADP9"/>
<dbReference type="BioCyc" id="EcoCyc:EG11830-MONOMER"/>
<dbReference type="PRO" id="PR:P0ADP9"/>
<dbReference type="Proteomes" id="UP000000625">
    <property type="component" value="Chromosome"/>
</dbReference>
<dbReference type="GO" id="GO:0005829">
    <property type="term" value="C:cytosol"/>
    <property type="evidence" value="ECO:0000314"/>
    <property type="project" value="EcoCyc"/>
</dbReference>
<dbReference type="FunFam" id="1.10.1580.20:FF:000001">
    <property type="entry name" value="YihD family protein"/>
    <property type="match status" value="1"/>
</dbReference>
<dbReference type="Gene3D" id="1.10.1580.20">
    <property type="entry name" value="Protein of unknown function DUF1040"/>
    <property type="match status" value="1"/>
</dbReference>
<dbReference type="InterPro" id="IPR009383">
    <property type="entry name" value="DUF1040"/>
</dbReference>
<dbReference type="InterPro" id="IPR038134">
    <property type="entry name" value="YihD_sf"/>
</dbReference>
<dbReference type="Pfam" id="PF06288">
    <property type="entry name" value="DUF1040"/>
    <property type="match status" value="1"/>
</dbReference>
<gene>
    <name type="primary">yihD</name>
    <name type="ordered locus">b3858</name>
    <name type="ordered locus">JW3830</name>
</gene>
<accession>P0ADP9</accession>
<accession>P32126</accession>
<accession>Q2M8F6</accession>
<name>YIHD_ECOLI</name>
<evidence type="ECO:0000305" key="1"/>
<feature type="chain" id="PRO_0000169670" description="Protein YihD">
    <location>
        <begin position="1"/>
        <end position="89"/>
    </location>
</feature>
<protein>
    <recommendedName>
        <fullName>Protein YihD</fullName>
    </recommendedName>
</protein>
<keyword id="KW-0903">Direct protein sequencing</keyword>
<keyword id="KW-1185">Reference proteome</keyword>
<sequence>MKCKRLNEVIELLQPAWQKEPDLNLLQFLQKLAKESGFDGELADLTDDILIYHLKMRDSAKDAVIPGLQKDYEEDFKTALLRARGVIKE</sequence>
<reference key="1">
    <citation type="journal article" date="1993" name="Nucleic Acids Res.">
        <title>Analysis of the Escherichia coli genome. III. DNA sequence of the region from 87.2 to 89.2 minutes.</title>
        <authorList>
            <person name="Plunkett G. III"/>
            <person name="Burland V."/>
            <person name="Daniels D.L."/>
            <person name="Blattner F.R."/>
        </authorList>
    </citation>
    <scope>NUCLEOTIDE SEQUENCE [LARGE SCALE GENOMIC DNA]</scope>
    <source>
        <strain>K12 / MG1655 / ATCC 47076</strain>
    </source>
</reference>
<reference key="2">
    <citation type="journal article" date="1997" name="Science">
        <title>The complete genome sequence of Escherichia coli K-12.</title>
        <authorList>
            <person name="Blattner F.R."/>
            <person name="Plunkett G. III"/>
            <person name="Bloch C.A."/>
            <person name="Perna N.T."/>
            <person name="Burland V."/>
            <person name="Riley M."/>
            <person name="Collado-Vides J."/>
            <person name="Glasner J.D."/>
            <person name="Rode C.K."/>
            <person name="Mayhew G.F."/>
            <person name="Gregor J."/>
            <person name="Davis N.W."/>
            <person name="Kirkpatrick H.A."/>
            <person name="Goeden M.A."/>
            <person name="Rose D.J."/>
            <person name="Mau B."/>
            <person name="Shao Y."/>
        </authorList>
    </citation>
    <scope>NUCLEOTIDE SEQUENCE [LARGE SCALE GENOMIC DNA]</scope>
    <source>
        <strain>K12 / MG1655 / ATCC 47076</strain>
    </source>
</reference>
<reference key="3">
    <citation type="journal article" date="2006" name="Mol. Syst. Biol.">
        <title>Highly accurate genome sequences of Escherichia coli K-12 strains MG1655 and W3110.</title>
        <authorList>
            <person name="Hayashi K."/>
            <person name="Morooka N."/>
            <person name="Yamamoto Y."/>
            <person name="Fujita K."/>
            <person name="Isono K."/>
            <person name="Choi S."/>
            <person name="Ohtsubo E."/>
            <person name="Baba T."/>
            <person name="Wanner B.L."/>
            <person name="Mori H."/>
            <person name="Horiuchi T."/>
        </authorList>
    </citation>
    <scope>NUCLEOTIDE SEQUENCE [LARGE SCALE GENOMIC DNA]</scope>
    <source>
        <strain>K12 / W3110 / ATCC 27325 / DSM 5911</strain>
    </source>
</reference>
<reference key="4">
    <citation type="journal article" date="1998" name="FEMS Microbiol. Lett.">
        <title>Small genes/gene-products in Escherichia coli K-12.</title>
        <authorList>
            <person name="Wasinger V.C."/>
            <person name="Humphery-Smith I."/>
        </authorList>
    </citation>
    <scope>PROTEIN SEQUENCE OF 1-10</scope>
    <source>
        <strain>K12</strain>
    </source>
</reference>
<comment type="similarity">
    <text evidence="1">To H.influenzae HI_0845.</text>
</comment>
<organism>
    <name type="scientific">Escherichia coli (strain K12)</name>
    <dbReference type="NCBI Taxonomy" id="83333"/>
    <lineage>
        <taxon>Bacteria</taxon>
        <taxon>Pseudomonadati</taxon>
        <taxon>Pseudomonadota</taxon>
        <taxon>Gammaproteobacteria</taxon>
        <taxon>Enterobacterales</taxon>
        <taxon>Enterobacteriaceae</taxon>
        <taxon>Escherichia</taxon>
    </lineage>
</organism>
<proteinExistence type="evidence at protein level"/>